<proteinExistence type="inferred from homology"/>
<organism>
    <name type="scientific">Lactobacillus gasseri (strain ATCC 33323 / DSM 20243 / BCRC 14619 / CIP 102991 / JCM 1131 / KCTC 3163 / NCIMB 11718 / NCTC 13722 / AM63)</name>
    <dbReference type="NCBI Taxonomy" id="324831"/>
    <lineage>
        <taxon>Bacteria</taxon>
        <taxon>Bacillati</taxon>
        <taxon>Bacillota</taxon>
        <taxon>Bacilli</taxon>
        <taxon>Lactobacillales</taxon>
        <taxon>Lactobacillaceae</taxon>
        <taxon>Lactobacillus</taxon>
    </lineage>
</organism>
<reference key="1">
    <citation type="journal article" date="2006" name="Proc. Natl. Acad. Sci. U.S.A.">
        <title>Comparative genomics of the lactic acid bacteria.</title>
        <authorList>
            <person name="Makarova K.S."/>
            <person name="Slesarev A."/>
            <person name="Wolf Y.I."/>
            <person name="Sorokin A."/>
            <person name="Mirkin B."/>
            <person name="Koonin E.V."/>
            <person name="Pavlov A."/>
            <person name="Pavlova N."/>
            <person name="Karamychev V."/>
            <person name="Polouchine N."/>
            <person name="Shakhova V."/>
            <person name="Grigoriev I."/>
            <person name="Lou Y."/>
            <person name="Rohksar D."/>
            <person name="Lucas S."/>
            <person name="Huang K."/>
            <person name="Goodstein D.M."/>
            <person name="Hawkins T."/>
            <person name="Plengvidhya V."/>
            <person name="Welker D."/>
            <person name="Hughes J."/>
            <person name="Goh Y."/>
            <person name="Benson A."/>
            <person name="Baldwin K."/>
            <person name="Lee J.-H."/>
            <person name="Diaz-Muniz I."/>
            <person name="Dosti B."/>
            <person name="Smeianov V."/>
            <person name="Wechter W."/>
            <person name="Barabote R."/>
            <person name="Lorca G."/>
            <person name="Altermann E."/>
            <person name="Barrangou R."/>
            <person name="Ganesan B."/>
            <person name="Xie Y."/>
            <person name="Rawsthorne H."/>
            <person name="Tamir D."/>
            <person name="Parker C."/>
            <person name="Breidt F."/>
            <person name="Broadbent J.R."/>
            <person name="Hutkins R."/>
            <person name="O'Sullivan D."/>
            <person name="Steele J."/>
            <person name="Unlu G."/>
            <person name="Saier M.H. Jr."/>
            <person name="Klaenhammer T."/>
            <person name="Richardson P."/>
            <person name="Kozyavkin S."/>
            <person name="Weimer B.C."/>
            <person name="Mills D.A."/>
        </authorList>
    </citation>
    <scope>NUCLEOTIDE SEQUENCE [LARGE SCALE GENOMIC DNA]</scope>
    <source>
        <strain>ATCC 33323 / DSM 20243 / BCRC 14619 / CIP 102991 / JCM 1131 / KCTC 3163 / NCIMB 11718 / NCTC 13722 / AM63</strain>
    </source>
</reference>
<comment type="function">
    <text evidence="1">One of the primary rRNA binding proteins, it binds directly to 16S rRNA where it nucleates assembly of the body of the 30S subunit.</text>
</comment>
<comment type="function">
    <text evidence="1">With S5 and S12 plays an important role in translational accuracy.</text>
</comment>
<comment type="subunit">
    <text evidence="1">Part of the 30S ribosomal subunit. Contacts protein S5. The interaction surface between S4 and S5 is involved in control of translational fidelity.</text>
</comment>
<comment type="similarity">
    <text evidence="1">Belongs to the universal ribosomal protein uS4 family.</text>
</comment>
<comment type="sequence caution" evidence="2">
    <conflict type="erroneous initiation">
        <sequence resource="EMBL-CDS" id="ABJ60595"/>
    </conflict>
</comment>
<protein>
    <recommendedName>
        <fullName evidence="1">Small ribosomal subunit protein uS4</fullName>
    </recommendedName>
    <alternativeName>
        <fullName evidence="2">30S ribosomal protein S4</fullName>
    </alternativeName>
</protein>
<name>RS4_LACGA</name>
<evidence type="ECO:0000255" key="1">
    <source>
        <dbReference type="HAMAP-Rule" id="MF_01306"/>
    </source>
</evidence>
<evidence type="ECO:0000305" key="2"/>
<gene>
    <name evidence="1" type="primary">rpsD</name>
    <name type="ordered locus">LGAS_1226</name>
</gene>
<dbReference type="EMBL" id="CP000413">
    <property type="protein sequence ID" value="ABJ60595.1"/>
    <property type="status" value="ALT_INIT"/>
    <property type="molecule type" value="Genomic_DNA"/>
</dbReference>
<dbReference type="RefSeq" id="WP_003647084.1">
    <property type="nucleotide sequence ID" value="NZ_WBMG01000002.1"/>
</dbReference>
<dbReference type="SMR" id="Q042M7"/>
<dbReference type="GeneID" id="83570614"/>
<dbReference type="KEGG" id="lga:LGAS_1226"/>
<dbReference type="HOGENOM" id="CLU_092403_0_1_9"/>
<dbReference type="BioCyc" id="LGAS324831:G1G6Y-1222-MONOMER"/>
<dbReference type="Proteomes" id="UP000000664">
    <property type="component" value="Chromosome"/>
</dbReference>
<dbReference type="GO" id="GO:0015935">
    <property type="term" value="C:small ribosomal subunit"/>
    <property type="evidence" value="ECO:0007669"/>
    <property type="project" value="InterPro"/>
</dbReference>
<dbReference type="GO" id="GO:0019843">
    <property type="term" value="F:rRNA binding"/>
    <property type="evidence" value="ECO:0007669"/>
    <property type="project" value="UniProtKB-UniRule"/>
</dbReference>
<dbReference type="GO" id="GO:0003735">
    <property type="term" value="F:structural constituent of ribosome"/>
    <property type="evidence" value="ECO:0007669"/>
    <property type="project" value="InterPro"/>
</dbReference>
<dbReference type="GO" id="GO:0042274">
    <property type="term" value="P:ribosomal small subunit biogenesis"/>
    <property type="evidence" value="ECO:0007669"/>
    <property type="project" value="TreeGrafter"/>
</dbReference>
<dbReference type="GO" id="GO:0006412">
    <property type="term" value="P:translation"/>
    <property type="evidence" value="ECO:0007669"/>
    <property type="project" value="UniProtKB-UniRule"/>
</dbReference>
<dbReference type="CDD" id="cd00165">
    <property type="entry name" value="S4"/>
    <property type="match status" value="1"/>
</dbReference>
<dbReference type="FunFam" id="3.10.290.10:FF:000001">
    <property type="entry name" value="30S ribosomal protein S4"/>
    <property type="match status" value="1"/>
</dbReference>
<dbReference type="Gene3D" id="1.10.1050.10">
    <property type="entry name" value="Ribosomal Protein S4 Delta 41, Chain A, domain 1"/>
    <property type="match status" value="1"/>
</dbReference>
<dbReference type="Gene3D" id="3.10.290.10">
    <property type="entry name" value="RNA-binding S4 domain"/>
    <property type="match status" value="1"/>
</dbReference>
<dbReference type="HAMAP" id="MF_01306_B">
    <property type="entry name" value="Ribosomal_uS4_B"/>
    <property type="match status" value="1"/>
</dbReference>
<dbReference type="InterPro" id="IPR022801">
    <property type="entry name" value="Ribosomal_uS4"/>
</dbReference>
<dbReference type="InterPro" id="IPR005709">
    <property type="entry name" value="Ribosomal_uS4_bac-type"/>
</dbReference>
<dbReference type="InterPro" id="IPR018079">
    <property type="entry name" value="Ribosomal_uS4_CS"/>
</dbReference>
<dbReference type="InterPro" id="IPR001912">
    <property type="entry name" value="Ribosomal_uS4_N"/>
</dbReference>
<dbReference type="InterPro" id="IPR002942">
    <property type="entry name" value="S4_RNA-bd"/>
</dbReference>
<dbReference type="InterPro" id="IPR036986">
    <property type="entry name" value="S4_RNA-bd_sf"/>
</dbReference>
<dbReference type="NCBIfam" id="NF003717">
    <property type="entry name" value="PRK05327.1"/>
    <property type="match status" value="1"/>
</dbReference>
<dbReference type="NCBIfam" id="TIGR01017">
    <property type="entry name" value="rpsD_bact"/>
    <property type="match status" value="1"/>
</dbReference>
<dbReference type="PANTHER" id="PTHR11831">
    <property type="entry name" value="30S 40S RIBOSOMAL PROTEIN"/>
    <property type="match status" value="1"/>
</dbReference>
<dbReference type="PANTHER" id="PTHR11831:SF4">
    <property type="entry name" value="SMALL RIBOSOMAL SUBUNIT PROTEIN US4M"/>
    <property type="match status" value="1"/>
</dbReference>
<dbReference type="Pfam" id="PF00163">
    <property type="entry name" value="Ribosomal_S4"/>
    <property type="match status" value="1"/>
</dbReference>
<dbReference type="Pfam" id="PF01479">
    <property type="entry name" value="S4"/>
    <property type="match status" value="1"/>
</dbReference>
<dbReference type="SMART" id="SM01390">
    <property type="entry name" value="Ribosomal_S4"/>
    <property type="match status" value="1"/>
</dbReference>
<dbReference type="SMART" id="SM00363">
    <property type="entry name" value="S4"/>
    <property type="match status" value="1"/>
</dbReference>
<dbReference type="SUPFAM" id="SSF55174">
    <property type="entry name" value="Alpha-L RNA-binding motif"/>
    <property type="match status" value="1"/>
</dbReference>
<dbReference type="PROSITE" id="PS00632">
    <property type="entry name" value="RIBOSOMAL_S4"/>
    <property type="match status" value="1"/>
</dbReference>
<dbReference type="PROSITE" id="PS50889">
    <property type="entry name" value="S4"/>
    <property type="match status" value="1"/>
</dbReference>
<feature type="chain" id="PRO_0000293457" description="Small ribosomal subunit protein uS4">
    <location>
        <begin position="1"/>
        <end position="203"/>
    </location>
</feature>
<feature type="domain" description="S4 RNA-binding" evidence="1">
    <location>
        <begin position="93"/>
        <end position="153"/>
    </location>
</feature>
<accession>Q042M7</accession>
<keyword id="KW-0687">Ribonucleoprotein</keyword>
<keyword id="KW-0689">Ribosomal protein</keyword>
<keyword id="KW-0694">RNA-binding</keyword>
<keyword id="KW-0699">rRNA-binding</keyword>
<sequence>MSRYTGPSWKRSRRLGISLSGTGKEISRRNYAPGDHGPNNRAKVSEYGQQLKEKQKLRWMFGLNERQFQNLFIRAGKIREGKHGVNFMALLERRLDNIVYRLGLASTREQARQLVNHGHILVDGKRVDIPSYEVKVGQEISLRDKSKNLQQVKDALDAVVSRPPFVSFDDSKMTGTLVRLPERDEMEPEVDEALIVEWYNKKL</sequence>